<reference key="1">
    <citation type="journal article" date="2002" name="Nature">
        <title>The genome sequence of Schizosaccharomyces pombe.</title>
        <authorList>
            <person name="Wood V."/>
            <person name="Gwilliam R."/>
            <person name="Rajandream M.A."/>
            <person name="Lyne M.H."/>
            <person name="Lyne R."/>
            <person name="Stewart A."/>
            <person name="Sgouros J.G."/>
            <person name="Peat N."/>
            <person name="Hayles J."/>
            <person name="Baker S.G."/>
            <person name="Basham D."/>
            <person name="Bowman S."/>
            <person name="Brooks K."/>
            <person name="Brown D."/>
            <person name="Brown S."/>
            <person name="Chillingworth T."/>
            <person name="Churcher C.M."/>
            <person name="Collins M."/>
            <person name="Connor R."/>
            <person name="Cronin A."/>
            <person name="Davis P."/>
            <person name="Feltwell T."/>
            <person name="Fraser A."/>
            <person name="Gentles S."/>
            <person name="Goble A."/>
            <person name="Hamlin N."/>
            <person name="Harris D.E."/>
            <person name="Hidalgo J."/>
            <person name="Hodgson G."/>
            <person name="Holroyd S."/>
            <person name="Hornsby T."/>
            <person name="Howarth S."/>
            <person name="Huckle E.J."/>
            <person name="Hunt S."/>
            <person name="Jagels K."/>
            <person name="James K.D."/>
            <person name="Jones L."/>
            <person name="Jones M."/>
            <person name="Leather S."/>
            <person name="McDonald S."/>
            <person name="McLean J."/>
            <person name="Mooney P."/>
            <person name="Moule S."/>
            <person name="Mungall K.L."/>
            <person name="Murphy L.D."/>
            <person name="Niblett D."/>
            <person name="Odell C."/>
            <person name="Oliver K."/>
            <person name="O'Neil S."/>
            <person name="Pearson D."/>
            <person name="Quail M.A."/>
            <person name="Rabbinowitsch E."/>
            <person name="Rutherford K.M."/>
            <person name="Rutter S."/>
            <person name="Saunders D."/>
            <person name="Seeger K."/>
            <person name="Sharp S."/>
            <person name="Skelton J."/>
            <person name="Simmonds M.N."/>
            <person name="Squares R."/>
            <person name="Squares S."/>
            <person name="Stevens K."/>
            <person name="Taylor K."/>
            <person name="Taylor R.G."/>
            <person name="Tivey A."/>
            <person name="Walsh S.V."/>
            <person name="Warren T."/>
            <person name="Whitehead S."/>
            <person name="Woodward J.R."/>
            <person name="Volckaert G."/>
            <person name="Aert R."/>
            <person name="Robben J."/>
            <person name="Grymonprez B."/>
            <person name="Weltjens I."/>
            <person name="Vanstreels E."/>
            <person name="Rieger M."/>
            <person name="Schaefer M."/>
            <person name="Mueller-Auer S."/>
            <person name="Gabel C."/>
            <person name="Fuchs M."/>
            <person name="Duesterhoeft A."/>
            <person name="Fritzc C."/>
            <person name="Holzer E."/>
            <person name="Moestl D."/>
            <person name="Hilbert H."/>
            <person name="Borzym K."/>
            <person name="Langer I."/>
            <person name="Beck A."/>
            <person name="Lehrach H."/>
            <person name="Reinhardt R."/>
            <person name="Pohl T.M."/>
            <person name="Eger P."/>
            <person name="Zimmermann W."/>
            <person name="Wedler H."/>
            <person name="Wambutt R."/>
            <person name="Purnelle B."/>
            <person name="Goffeau A."/>
            <person name="Cadieu E."/>
            <person name="Dreano S."/>
            <person name="Gloux S."/>
            <person name="Lelaure V."/>
            <person name="Mottier S."/>
            <person name="Galibert F."/>
            <person name="Aves S.J."/>
            <person name="Xiang Z."/>
            <person name="Hunt C."/>
            <person name="Moore K."/>
            <person name="Hurst S.M."/>
            <person name="Lucas M."/>
            <person name="Rochet M."/>
            <person name="Gaillardin C."/>
            <person name="Tallada V.A."/>
            <person name="Garzon A."/>
            <person name="Thode G."/>
            <person name="Daga R.R."/>
            <person name="Cruzado L."/>
            <person name="Jimenez J."/>
            <person name="Sanchez M."/>
            <person name="del Rey F."/>
            <person name="Benito J."/>
            <person name="Dominguez A."/>
            <person name="Revuelta J.L."/>
            <person name="Moreno S."/>
            <person name="Armstrong J."/>
            <person name="Forsburg S.L."/>
            <person name="Cerutti L."/>
            <person name="Lowe T."/>
            <person name="McCombie W.R."/>
            <person name="Paulsen I."/>
            <person name="Potashkin J."/>
            <person name="Shpakovski G.V."/>
            <person name="Ussery D."/>
            <person name="Barrell B.G."/>
            <person name="Nurse P."/>
        </authorList>
    </citation>
    <scope>NUCLEOTIDE SEQUENCE [LARGE SCALE GENOMIC DNA]</scope>
    <source>
        <strain>972 / ATCC 24843</strain>
    </source>
</reference>
<reference key="2">
    <citation type="journal article" date="2000" name="Genes Cells">
        <title>Large-scale screening of intracellular protein localization in living fission yeast cells by the use of a GFP-fusion genomic DNA library.</title>
        <authorList>
            <person name="Ding D.-Q."/>
            <person name="Tomita Y."/>
            <person name="Yamamoto A."/>
            <person name="Chikashige Y."/>
            <person name="Haraguchi T."/>
            <person name="Hiraoka Y."/>
        </authorList>
    </citation>
    <scope>NUCLEOTIDE SEQUENCE [LARGE SCALE GENOMIC DNA] OF 164-358</scope>
    <scope>SUBCELLULAR LOCATION</scope>
    <source>
        <strain>ATCC 38364 / 968</strain>
    </source>
</reference>
<reference key="3">
    <citation type="journal article" date="2006" name="Nat. Biotechnol.">
        <title>ORFeome cloning and global analysis of protein localization in the fission yeast Schizosaccharomyces pombe.</title>
        <authorList>
            <person name="Matsuyama A."/>
            <person name="Arai R."/>
            <person name="Yashiroda Y."/>
            <person name="Shirai A."/>
            <person name="Kamata A."/>
            <person name="Sekido S."/>
            <person name="Kobayashi Y."/>
            <person name="Hashimoto A."/>
            <person name="Hamamoto M."/>
            <person name="Hiraoka Y."/>
            <person name="Horinouchi S."/>
            <person name="Yoshida M."/>
        </authorList>
    </citation>
    <scope>SUBCELLULAR LOCATION [LARGE SCALE ANALYSIS]</scope>
</reference>
<sequence>MSLEDCYNVTQSYAAVAIHKEQTADYVEAIALFQKAKRNILMNPEFKYARERLHVMDYEDRHYVETLLCMLEQLTIRIEFLTKEIAQQEAAYKDIQNTQKSLVTQSSTGSANVAYISGNGPGDRSFIDDGNYSASSFERQNRTAPLQSKVTTASLKPNIPRTSMSSSPTASRTSLRKGAGELETHSAVKSAKKASVKSKSVLPPSKSLARTGLPAEVSTQNNANRAALLAWGSLNSSKPKHALPPSYISSEAAQASRSSFQVERHRPTPDNSAVIEAARRTYSSISSSSSPFKKKTQSHLPNRTTEVPSISKQLSKSSTSIATVAPSLASVSSVTKSPSPTPQSAPRAQSASTETAQDLDFLTPPRLSVNNPFLSDLYPASEQGLSSCEEKDSPVDGDEFFNHTNEEEIIEKQFQSTSISAMTSEKQEQILRECPDIDEELGKSILREIVVSGDEVHWDDISGLEFAKHSLKEAVVYPFLRPDLFQGLREPARGMLLFGPPGTGKTMLARAVATESRSVFFSISASSLTSKFLGESEKLVRALFTLAKKLSPSIIFVDEIDSLLSARSSDGNEHETSRRIKTEFLIQWSSLARAAASRQTADHPRVLVLAATNLPWCIDDAARRRFVRRTYIPLPDETTRRLHLNNLLKYQKHSLSLEDIEAIVKATEYYSGSDLTALAKDAAMGPLRSLGESLLFTKMESIRPINLDDFKTSIKVIRPSVNLQGLERYSEWDKEFGSQGH</sequence>
<proteinExistence type="inferred from homology"/>
<comment type="subcellular location">
    <subcellularLocation>
        <location evidence="4">Cytoplasm</location>
    </subcellularLocation>
    <subcellularLocation>
        <location evidence="3">Nucleus</location>
    </subcellularLocation>
</comment>
<comment type="similarity">
    <text evidence="5">Belongs to the AAA ATPase family.</text>
</comment>
<gene>
    <name type="ORF">SPAC328.04</name>
</gene>
<dbReference type="EMBL" id="CU329670">
    <property type="protein sequence ID" value="CAB95999.1"/>
    <property type="molecule type" value="Genomic_DNA"/>
</dbReference>
<dbReference type="EMBL" id="AB027998">
    <property type="protein sequence ID" value="BAA87302.1"/>
    <property type="molecule type" value="Genomic_DNA"/>
</dbReference>
<dbReference type="SMR" id="Q9P3U2"/>
<dbReference type="BioGRID" id="279637">
    <property type="interactions" value="34"/>
</dbReference>
<dbReference type="FunCoup" id="Q9P3U2">
    <property type="interactions" value="36"/>
</dbReference>
<dbReference type="IntAct" id="Q9P3U2">
    <property type="interactions" value="3"/>
</dbReference>
<dbReference type="STRING" id="284812.Q9P3U2"/>
<dbReference type="iPTMnet" id="Q9P3U2"/>
<dbReference type="PaxDb" id="4896-SPAC328.04.1"/>
<dbReference type="EnsemblFungi" id="SPAC328.04.1">
    <property type="protein sequence ID" value="SPAC328.04.1:pep"/>
    <property type="gene ID" value="SPAC328.04"/>
</dbReference>
<dbReference type="KEGG" id="spo:2543208"/>
<dbReference type="PomBase" id="SPAC328.04"/>
<dbReference type="VEuPathDB" id="FungiDB:SPAC328.04"/>
<dbReference type="eggNOG" id="KOG0740">
    <property type="taxonomic scope" value="Eukaryota"/>
</dbReference>
<dbReference type="HOGENOM" id="CLU_000688_15_3_1"/>
<dbReference type="InParanoid" id="Q9P3U2"/>
<dbReference type="OMA" id="SADGNEH"/>
<dbReference type="PhylomeDB" id="Q9P3U2"/>
<dbReference type="PRO" id="PR:Q9P3U2"/>
<dbReference type="Proteomes" id="UP000002485">
    <property type="component" value="Chromosome I"/>
</dbReference>
<dbReference type="GO" id="GO:0005737">
    <property type="term" value="C:cytoplasm"/>
    <property type="evidence" value="ECO:0007005"/>
    <property type="project" value="PomBase"/>
</dbReference>
<dbReference type="GO" id="GO:0005634">
    <property type="term" value="C:nucleus"/>
    <property type="evidence" value="ECO:0007669"/>
    <property type="project" value="UniProtKB-SubCell"/>
</dbReference>
<dbReference type="GO" id="GO:0005524">
    <property type="term" value="F:ATP binding"/>
    <property type="evidence" value="ECO:0000255"/>
    <property type="project" value="PomBase"/>
</dbReference>
<dbReference type="GO" id="GO:0016887">
    <property type="term" value="F:ATP hydrolysis activity"/>
    <property type="evidence" value="ECO:0000318"/>
    <property type="project" value="GO_Central"/>
</dbReference>
<dbReference type="GO" id="GO:0008568">
    <property type="term" value="F:microtubule severing ATPase activity"/>
    <property type="evidence" value="ECO:0000266"/>
    <property type="project" value="PomBase"/>
</dbReference>
<dbReference type="GO" id="GO:0051013">
    <property type="term" value="P:microtubule severing"/>
    <property type="evidence" value="ECO:0000266"/>
    <property type="project" value="PomBase"/>
</dbReference>
<dbReference type="CDD" id="cd19509">
    <property type="entry name" value="RecA-like_VPS4-like"/>
    <property type="match status" value="1"/>
</dbReference>
<dbReference type="FunFam" id="1.10.8.60:FF:000022">
    <property type="entry name" value="Fidgetin like 1"/>
    <property type="match status" value="1"/>
</dbReference>
<dbReference type="FunFam" id="3.40.50.300:FF:000093">
    <property type="entry name" value="Fidgetin-like 1"/>
    <property type="match status" value="1"/>
</dbReference>
<dbReference type="Gene3D" id="1.10.8.60">
    <property type="match status" value="1"/>
</dbReference>
<dbReference type="Gene3D" id="3.40.50.300">
    <property type="entry name" value="P-loop containing nucleotide triphosphate hydrolases"/>
    <property type="match status" value="1"/>
</dbReference>
<dbReference type="InterPro" id="IPR003593">
    <property type="entry name" value="AAA+_ATPase"/>
</dbReference>
<dbReference type="InterPro" id="IPR041569">
    <property type="entry name" value="AAA_lid_3"/>
</dbReference>
<dbReference type="InterPro" id="IPR003959">
    <property type="entry name" value="ATPase_AAA_core"/>
</dbReference>
<dbReference type="InterPro" id="IPR003960">
    <property type="entry name" value="ATPase_AAA_CS"/>
</dbReference>
<dbReference type="InterPro" id="IPR050304">
    <property type="entry name" value="MT-severing_AAA_ATPase"/>
</dbReference>
<dbReference type="InterPro" id="IPR027417">
    <property type="entry name" value="P-loop_NTPase"/>
</dbReference>
<dbReference type="InterPro" id="IPR015415">
    <property type="entry name" value="Spast_Vps4_C"/>
</dbReference>
<dbReference type="PANTHER" id="PTHR23074">
    <property type="entry name" value="AAA DOMAIN-CONTAINING"/>
    <property type="match status" value="1"/>
</dbReference>
<dbReference type="PANTHER" id="PTHR23074:SF17">
    <property type="entry name" value="FIDGETIN-LIKE PROTEIN 1"/>
    <property type="match status" value="1"/>
</dbReference>
<dbReference type="Pfam" id="PF00004">
    <property type="entry name" value="AAA"/>
    <property type="match status" value="1"/>
</dbReference>
<dbReference type="Pfam" id="PF17862">
    <property type="entry name" value="AAA_lid_3"/>
    <property type="match status" value="1"/>
</dbReference>
<dbReference type="Pfam" id="PF09336">
    <property type="entry name" value="Vps4_C"/>
    <property type="match status" value="1"/>
</dbReference>
<dbReference type="SMART" id="SM00382">
    <property type="entry name" value="AAA"/>
    <property type="match status" value="1"/>
</dbReference>
<dbReference type="SUPFAM" id="SSF52540">
    <property type="entry name" value="P-loop containing nucleoside triphosphate hydrolases"/>
    <property type="match status" value="1"/>
</dbReference>
<dbReference type="PROSITE" id="PS00674">
    <property type="entry name" value="AAA"/>
    <property type="match status" value="1"/>
</dbReference>
<keyword id="KW-0067">ATP-binding</keyword>
<keyword id="KW-0175">Coiled coil</keyword>
<keyword id="KW-0963">Cytoplasm</keyword>
<keyword id="KW-0547">Nucleotide-binding</keyword>
<keyword id="KW-0539">Nucleus</keyword>
<keyword id="KW-1185">Reference proteome</keyword>
<protein>
    <recommendedName>
        <fullName>Uncharacterized AAA domain-containing protein C328.04</fullName>
    </recommendedName>
</protein>
<evidence type="ECO:0000255" key="1"/>
<evidence type="ECO:0000256" key="2">
    <source>
        <dbReference type="SAM" id="MobiDB-lite"/>
    </source>
</evidence>
<evidence type="ECO:0000269" key="3">
    <source>
    </source>
</evidence>
<evidence type="ECO:0000269" key="4">
    <source>
    </source>
</evidence>
<evidence type="ECO:0000305" key="5"/>
<name>YKX4_SCHPO</name>
<organism>
    <name type="scientific">Schizosaccharomyces pombe (strain 972 / ATCC 24843)</name>
    <name type="common">Fission yeast</name>
    <dbReference type="NCBI Taxonomy" id="284812"/>
    <lineage>
        <taxon>Eukaryota</taxon>
        <taxon>Fungi</taxon>
        <taxon>Dikarya</taxon>
        <taxon>Ascomycota</taxon>
        <taxon>Taphrinomycotina</taxon>
        <taxon>Schizosaccharomycetes</taxon>
        <taxon>Schizosaccharomycetales</taxon>
        <taxon>Schizosaccharomycetaceae</taxon>
        <taxon>Schizosaccharomyces</taxon>
    </lineage>
</organism>
<accession>Q9P3U2</accession>
<accession>Q9UTU2</accession>
<feature type="chain" id="PRO_0000374025" description="Uncharacterized AAA domain-containing protein C328.04">
    <location>
        <begin position="1"/>
        <end position="741"/>
    </location>
</feature>
<feature type="region of interest" description="Disordered" evidence="2">
    <location>
        <begin position="137"/>
        <end position="214"/>
    </location>
</feature>
<feature type="region of interest" description="Disordered" evidence="2">
    <location>
        <begin position="280"/>
        <end position="318"/>
    </location>
</feature>
<feature type="region of interest" description="Disordered" evidence="2">
    <location>
        <begin position="330"/>
        <end position="364"/>
    </location>
</feature>
<feature type="coiled-coil region" evidence="1">
    <location>
        <begin position="64"/>
        <end position="103"/>
    </location>
</feature>
<feature type="compositionally biased region" description="Polar residues" evidence="2">
    <location>
        <begin position="137"/>
        <end position="155"/>
    </location>
</feature>
<feature type="compositionally biased region" description="Low complexity" evidence="2">
    <location>
        <begin position="161"/>
        <end position="173"/>
    </location>
</feature>
<feature type="compositionally biased region" description="Low complexity" evidence="2">
    <location>
        <begin position="197"/>
        <end position="209"/>
    </location>
</feature>
<feature type="compositionally biased region" description="Polar residues" evidence="2">
    <location>
        <begin position="298"/>
        <end position="308"/>
    </location>
</feature>
<feature type="compositionally biased region" description="Low complexity" evidence="2">
    <location>
        <begin position="309"/>
        <end position="318"/>
    </location>
</feature>
<feature type="compositionally biased region" description="Low complexity" evidence="2">
    <location>
        <begin position="330"/>
        <end position="344"/>
    </location>
</feature>
<feature type="compositionally biased region" description="Polar residues" evidence="2">
    <location>
        <begin position="346"/>
        <end position="356"/>
    </location>
</feature>
<feature type="binding site" evidence="1">
    <location>
        <begin position="499"/>
        <end position="506"/>
    </location>
    <ligand>
        <name>ATP</name>
        <dbReference type="ChEBI" id="CHEBI:30616"/>
    </ligand>
</feature>